<proteinExistence type="inferred from homology"/>
<keyword id="KW-0029">Amino-acid transport</keyword>
<keyword id="KW-0067">ATP-binding</keyword>
<keyword id="KW-1003">Cell membrane</keyword>
<keyword id="KW-0472">Membrane</keyword>
<keyword id="KW-0547">Nucleotide-binding</keyword>
<keyword id="KW-1185">Reference proteome</keyword>
<keyword id="KW-1278">Translocase</keyword>
<keyword id="KW-0813">Transport</keyword>
<gene>
    <name evidence="1" type="primary">metN</name>
    <name type="ordered locus">Ldb0793</name>
</gene>
<sequence length="351" mass="38300">MSIVQLDHVSVTFKRKKAADVQAVQDVTLHIEKGDIYGIVGFSGAGKSTLVRTINLLQKPTAGDVVVGGVDFVKDGKQVISGKDLQARRRKIGMIFQQFNLLNETTVIENIAFALKHSDLSDDELEEKCHKLLKLVDLEDKANAYPAQLSGGQQQRVAIARALANDPEILLSDEATSALDPQTTIQILDLLKKLNRELGLTIVLITHEMAAVKKIANKVAVMENGRVVENGNLRDVFLAPKAELTQKFVGGSLAVVDTLKSLNISLAENEALYQLVYSLNNVAKSIIIELYREVGVEASMLYGNVEVLADEPVGTLLVMVKGDADKQKATLKFLSDEGVTVTELDERGNRL</sequence>
<comment type="function">
    <text evidence="1">Part of the ABC transporter complex MetNIQ involved in methionine import. Responsible for energy coupling to the transport system.</text>
</comment>
<comment type="catalytic activity">
    <reaction evidence="1">
        <text>L-methionine(out) + ATP + H2O = L-methionine(in) + ADP + phosphate + H(+)</text>
        <dbReference type="Rhea" id="RHEA:29779"/>
        <dbReference type="ChEBI" id="CHEBI:15377"/>
        <dbReference type="ChEBI" id="CHEBI:15378"/>
        <dbReference type="ChEBI" id="CHEBI:30616"/>
        <dbReference type="ChEBI" id="CHEBI:43474"/>
        <dbReference type="ChEBI" id="CHEBI:57844"/>
        <dbReference type="ChEBI" id="CHEBI:456216"/>
        <dbReference type="EC" id="7.4.2.11"/>
    </reaction>
</comment>
<comment type="catalytic activity">
    <reaction evidence="1">
        <text>D-methionine(out) + ATP + H2O = D-methionine(in) + ADP + phosphate + H(+)</text>
        <dbReference type="Rhea" id="RHEA:29767"/>
        <dbReference type="ChEBI" id="CHEBI:15377"/>
        <dbReference type="ChEBI" id="CHEBI:15378"/>
        <dbReference type="ChEBI" id="CHEBI:30616"/>
        <dbReference type="ChEBI" id="CHEBI:43474"/>
        <dbReference type="ChEBI" id="CHEBI:57932"/>
        <dbReference type="ChEBI" id="CHEBI:456216"/>
        <dbReference type="EC" id="7.4.2.11"/>
    </reaction>
</comment>
<comment type="subunit">
    <text evidence="1">The complex is composed of two ATP-binding proteins (MetN), two transmembrane proteins (MetI) and a solute-binding protein (MetQ).</text>
</comment>
<comment type="subcellular location">
    <subcellularLocation>
        <location evidence="1">Cell membrane</location>
        <topology evidence="1">Peripheral membrane protein</topology>
    </subcellularLocation>
</comment>
<comment type="similarity">
    <text evidence="1">Belongs to the ABC transporter superfamily. Methionine importer (TC 3.A.1.24) family.</text>
</comment>
<dbReference type="EC" id="7.4.2.11" evidence="1"/>
<dbReference type="EMBL" id="CR954253">
    <property type="protein sequence ID" value="CAI97620.1"/>
    <property type="molecule type" value="Genomic_DNA"/>
</dbReference>
<dbReference type="RefSeq" id="WP_003619264.1">
    <property type="nucleotide sequence ID" value="NZ_JQAV01000001.1"/>
</dbReference>
<dbReference type="SMR" id="Q1GAN9"/>
<dbReference type="STRING" id="390333.Ldb0793"/>
<dbReference type="KEGG" id="ldb:Ldb0793"/>
<dbReference type="PATRIC" id="fig|390333.13.peg.6"/>
<dbReference type="eggNOG" id="COG1135">
    <property type="taxonomic scope" value="Bacteria"/>
</dbReference>
<dbReference type="HOGENOM" id="CLU_000604_1_3_9"/>
<dbReference type="BioCyc" id="LDEL390333:LDB_RS03490-MONOMER"/>
<dbReference type="Proteomes" id="UP000001259">
    <property type="component" value="Chromosome"/>
</dbReference>
<dbReference type="GO" id="GO:0005886">
    <property type="term" value="C:plasma membrane"/>
    <property type="evidence" value="ECO:0007669"/>
    <property type="project" value="UniProtKB-SubCell"/>
</dbReference>
<dbReference type="GO" id="GO:0033232">
    <property type="term" value="F:ABC-type D-methionine transporter activity"/>
    <property type="evidence" value="ECO:0007669"/>
    <property type="project" value="UniProtKB-EC"/>
</dbReference>
<dbReference type="GO" id="GO:0005524">
    <property type="term" value="F:ATP binding"/>
    <property type="evidence" value="ECO:0007669"/>
    <property type="project" value="UniProtKB-KW"/>
</dbReference>
<dbReference type="GO" id="GO:0016887">
    <property type="term" value="F:ATP hydrolysis activity"/>
    <property type="evidence" value="ECO:0007669"/>
    <property type="project" value="InterPro"/>
</dbReference>
<dbReference type="FunFam" id="3.40.50.300:FF:000056">
    <property type="entry name" value="Cell division ATP-binding protein FtsE"/>
    <property type="match status" value="1"/>
</dbReference>
<dbReference type="Gene3D" id="3.30.70.260">
    <property type="match status" value="1"/>
</dbReference>
<dbReference type="Gene3D" id="3.40.50.300">
    <property type="entry name" value="P-loop containing nucleotide triphosphate hydrolases"/>
    <property type="match status" value="1"/>
</dbReference>
<dbReference type="InterPro" id="IPR003593">
    <property type="entry name" value="AAA+_ATPase"/>
</dbReference>
<dbReference type="InterPro" id="IPR003439">
    <property type="entry name" value="ABC_transporter-like_ATP-bd"/>
</dbReference>
<dbReference type="InterPro" id="IPR017871">
    <property type="entry name" value="ABC_transporter-like_CS"/>
</dbReference>
<dbReference type="InterPro" id="IPR045865">
    <property type="entry name" value="ACT-like_dom_sf"/>
</dbReference>
<dbReference type="InterPro" id="IPR050086">
    <property type="entry name" value="MetN_ABC_transporter-like"/>
</dbReference>
<dbReference type="InterPro" id="IPR018449">
    <property type="entry name" value="NIL_domain"/>
</dbReference>
<dbReference type="InterPro" id="IPR027417">
    <property type="entry name" value="P-loop_NTPase"/>
</dbReference>
<dbReference type="PANTHER" id="PTHR43166">
    <property type="entry name" value="AMINO ACID IMPORT ATP-BINDING PROTEIN"/>
    <property type="match status" value="1"/>
</dbReference>
<dbReference type="PANTHER" id="PTHR43166:SF30">
    <property type="entry name" value="METHIONINE IMPORT ATP-BINDING PROTEIN METN"/>
    <property type="match status" value="1"/>
</dbReference>
<dbReference type="Pfam" id="PF00005">
    <property type="entry name" value="ABC_tran"/>
    <property type="match status" value="1"/>
</dbReference>
<dbReference type="Pfam" id="PF09383">
    <property type="entry name" value="NIL"/>
    <property type="match status" value="1"/>
</dbReference>
<dbReference type="SMART" id="SM00382">
    <property type="entry name" value="AAA"/>
    <property type="match status" value="1"/>
</dbReference>
<dbReference type="SMART" id="SM00930">
    <property type="entry name" value="NIL"/>
    <property type="match status" value="1"/>
</dbReference>
<dbReference type="SUPFAM" id="SSF55021">
    <property type="entry name" value="ACT-like"/>
    <property type="match status" value="1"/>
</dbReference>
<dbReference type="SUPFAM" id="SSF52540">
    <property type="entry name" value="P-loop containing nucleoside triphosphate hydrolases"/>
    <property type="match status" value="1"/>
</dbReference>
<dbReference type="PROSITE" id="PS00211">
    <property type="entry name" value="ABC_TRANSPORTER_1"/>
    <property type="match status" value="1"/>
</dbReference>
<dbReference type="PROSITE" id="PS50893">
    <property type="entry name" value="ABC_TRANSPORTER_2"/>
    <property type="match status" value="1"/>
</dbReference>
<dbReference type="PROSITE" id="PS51264">
    <property type="entry name" value="METN"/>
    <property type="match status" value="1"/>
</dbReference>
<organism>
    <name type="scientific">Lactobacillus delbrueckii subsp. bulgaricus (strain ATCC 11842 / DSM 20081 / BCRC 10696 / JCM 1002 / NBRC 13953 / NCIMB 11778 / NCTC 12712 / WDCM 00102 / Lb 14)</name>
    <dbReference type="NCBI Taxonomy" id="390333"/>
    <lineage>
        <taxon>Bacteria</taxon>
        <taxon>Bacillati</taxon>
        <taxon>Bacillota</taxon>
        <taxon>Bacilli</taxon>
        <taxon>Lactobacillales</taxon>
        <taxon>Lactobacillaceae</taxon>
        <taxon>Lactobacillus</taxon>
    </lineage>
</organism>
<name>METN_LACDA</name>
<evidence type="ECO:0000255" key="1">
    <source>
        <dbReference type="HAMAP-Rule" id="MF_01719"/>
    </source>
</evidence>
<feature type="chain" id="PRO_0000270314" description="Methionine import ATP-binding protein MetN">
    <location>
        <begin position="1"/>
        <end position="351"/>
    </location>
</feature>
<feature type="domain" description="ABC transporter" evidence="1">
    <location>
        <begin position="4"/>
        <end position="249"/>
    </location>
</feature>
<feature type="binding site" evidence="1">
    <location>
        <begin position="41"/>
        <end position="48"/>
    </location>
    <ligand>
        <name>ATP</name>
        <dbReference type="ChEBI" id="CHEBI:30616"/>
    </ligand>
</feature>
<reference key="1">
    <citation type="journal article" date="2006" name="Proc. Natl. Acad. Sci. U.S.A.">
        <title>The complete genome sequence of Lactobacillus bulgaricus reveals extensive and ongoing reductive evolution.</title>
        <authorList>
            <person name="van de Guchte M."/>
            <person name="Penaud S."/>
            <person name="Grimaldi C."/>
            <person name="Barbe V."/>
            <person name="Bryson K."/>
            <person name="Nicolas P."/>
            <person name="Robert C."/>
            <person name="Oztas S."/>
            <person name="Mangenot S."/>
            <person name="Couloux A."/>
            <person name="Loux V."/>
            <person name="Dervyn R."/>
            <person name="Bossy R."/>
            <person name="Bolotin A."/>
            <person name="Batto J.-M."/>
            <person name="Walunas T."/>
            <person name="Gibrat J.-F."/>
            <person name="Bessieres P."/>
            <person name="Weissenbach J."/>
            <person name="Ehrlich S.D."/>
            <person name="Maguin E."/>
        </authorList>
    </citation>
    <scope>NUCLEOTIDE SEQUENCE [LARGE SCALE GENOMIC DNA]</scope>
    <source>
        <strain>ATCC 11842 / DSM 20081 / BCRC 10696 / JCM 1002 / NBRC 13953 / NCIMB 11778 / NCTC 12712 / WDCM 00102 / Lb 14</strain>
    </source>
</reference>
<accession>Q1GAN9</accession>
<protein>
    <recommendedName>
        <fullName evidence="1">Methionine import ATP-binding protein MetN</fullName>
        <ecNumber evidence="1">7.4.2.11</ecNumber>
    </recommendedName>
</protein>